<keyword id="KW-0012">Acyltransferase</keyword>
<keyword id="KW-0963">Cytoplasm</keyword>
<keyword id="KW-0276">Fatty acid metabolism</keyword>
<keyword id="KW-0442">Lipid degradation</keyword>
<keyword id="KW-0443">Lipid metabolism</keyword>
<keyword id="KW-0808">Transferase</keyword>
<gene>
    <name evidence="1" type="primary">fadI</name>
    <name type="ordered locus">EcSMS35_2501</name>
</gene>
<evidence type="ECO:0000255" key="1">
    <source>
        <dbReference type="HAMAP-Rule" id="MF_01618"/>
    </source>
</evidence>
<accession>B1LME8</accession>
<organism>
    <name type="scientific">Escherichia coli (strain SMS-3-5 / SECEC)</name>
    <dbReference type="NCBI Taxonomy" id="439855"/>
    <lineage>
        <taxon>Bacteria</taxon>
        <taxon>Pseudomonadati</taxon>
        <taxon>Pseudomonadota</taxon>
        <taxon>Gammaproteobacteria</taxon>
        <taxon>Enterobacterales</taxon>
        <taxon>Enterobacteriaceae</taxon>
        <taxon>Escherichia</taxon>
    </lineage>
</organism>
<proteinExistence type="inferred from homology"/>
<protein>
    <recommendedName>
        <fullName evidence="1">3-ketoacyl-CoA thiolase</fullName>
        <ecNumber evidence="1">2.3.1.16</ecNumber>
    </recommendedName>
    <alternativeName>
        <fullName evidence="1">ACSs</fullName>
    </alternativeName>
    <alternativeName>
        <fullName evidence="1">Acetyl-CoA acyltransferase</fullName>
    </alternativeName>
    <alternativeName>
        <fullName evidence="1">Acyl-CoA ligase</fullName>
    </alternativeName>
    <alternativeName>
        <fullName evidence="1">Beta-ketothiolase</fullName>
    </alternativeName>
    <alternativeName>
        <fullName evidence="1">Fatty acid oxidation complex subunit beta</fullName>
    </alternativeName>
</protein>
<sequence length="436" mass="46516">MGQVLPLVTRLGDRIAIVSGLRTPFARQATAFHGIPAVDLGKMVVGELLARSEIPAEVIEQLVFGQVVQMPEAPNIAREIVLGTGMNVHTDAYSVSRACATSFQAIANVAESLMAGTIRAGIAGGADSSSVLPIGVSKKLARVLVDVNKARTMSQRLKLFSRLRLRDLMPVPPAVAEYSTGLRMGDTAEQMAKTYGITREQQDALAHRSHQRAAQAWSDGKLKEEVMTAFIPPYKQPLAEDNNIRGNSTLADYAKLRPAFDRKHGTVTAANSTPLTDGAAAVILMTESRAKELGLVPLGYLRSYAFTAIDVWQDMLLGPAWSTPLALERAGLTMSDLTLIDMHEAFAAQTLANIQLLGSERFARDVLGRAHATGEVDDSKFNVLGGSIAYGHPFAATGARMITQTLHELRRRGGGFGLVTACAAGGLGAAMVVEAE</sequence>
<feature type="chain" id="PRO_1000185967" description="3-ketoacyl-CoA thiolase">
    <location>
        <begin position="1"/>
        <end position="436"/>
    </location>
</feature>
<feature type="active site" description="Acyl-thioester intermediate" evidence="1">
    <location>
        <position position="99"/>
    </location>
</feature>
<feature type="active site" description="Proton acceptor" evidence="1">
    <location>
        <position position="392"/>
    </location>
</feature>
<feature type="active site" description="Proton acceptor" evidence="1">
    <location>
        <position position="422"/>
    </location>
</feature>
<dbReference type="EC" id="2.3.1.16" evidence="1"/>
<dbReference type="EMBL" id="CP000970">
    <property type="protein sequence ID" value="ACB19265.1"/>
    <property type="molecule type" value="Genomic_DNA"/>
</dbReference>
<dbReference type="RefSeq" id="WP_000531913.1">
    <property type="nucleotide sequence ID" value="NC_010498.1"/>
</dbReference>
<dbReference type="SMR" id="B1LME8"/>
<dbReference type="KEGG" id="ecm:EcSMS35_2501"/>
<dbReference type="HOGENOM" id="CLU_031026_2_0_6"/>
<dbReference type="UniPathway" id="UPA00659"/>
<dbReference type="Proteomes" id="UP000007011">
    <property type="component" value="Chromosome"/>
</dbReference>
<dbReference type="GO" id="GO:0005829">
    <property type="term" value="C:cytosol"/>
    <property type="evidence" value="ECO:0007669"/>
    <property type="project" value="TreeGrafter"/>
</dbReference>
<dbReference type="GO" id="GO:0003988">
    <property type="term" value="F:acetyl-CoA C-acyltransferase activity"/>
    <property type="evidence" value="ECO:0007669"/>
    <property type="project" value="UniProtKB-UniRule"/>
</dbReference>
<dbReference type="GO" id="GO:0006635">
    <property type="term" value="P:fatty acid beta-oxidation"/>
    <property type="evidence" value="ECO:0007669"/>
    <property type="project" value="UniProtKB-UniRule"/>
</dbReference>
<dbReference type="CDD" id="cd00751">
    <property type="entry name" value="thiolase"/>
    <property type="match status" value="1"/>
</dbReference>
<dbReference type="FunFam" id="3.40.47.10:FF:000011">
    <property type="entry name" value="3-ketoacyl-CoA thiolase"/>
    <property type="match status" value="1"/>
</dbReference>
<dbReference type="Gene3D" id="3.40.47.10">
    <property type="match status" value="1"/>
</dbReference>
<dbReference type="HAMAP" id="MF_01618">
    <property type="entry name" value="FadI"/>
    <property type="match status" value="1"/>
</dbReference>
<dbReference type="InterPro" id="IPR012806">
    <property type="entry name" value="Ac-CoA_C-AcTrfase_FadI"/>
</dbReference>
<dbReference type="InterPro" id="IPR002155">
    <property type="entry name" value="Thiolase"/>
</dbReference>
<dbReference type="InterPro" id="IPR016039">
    <property type="entry name" value="Thiolase-like"/>
</dbReference>
<dbReference type="InterPro" id="IPR020615">
    <property type="entry name" value="Thiolase_acyl_enz_int_AS"/>
</dbReference>
<dbReference type="InterPro" id="IPR020610">
    <property type="entry name" value="Thiolase_AS"/>
</dbReference>
<dbReference type="InterPro" id="IPR020617">
    <property type="entry name" value="Thiolase_C"/>
</dbReference>
<dbReference type="InterPro" id="IPR020613">
    <property type="entry name" value="Thiolase_CS"/>
</dbReference>
<dbReference type="InterPro" id="IPR020616">
    <property type="entry name" value="Thiolase_N"/>
</dbReference>
<dbReference type="NCBIfam" id="TIGR01930">
    <property type="entry name" value="AcCoA-C-Actrans"/>
    <property type="match status" value="1"/>
</dbReference>
<dbReference type="NCBIfam" id="TIGR02446">
    <property type="entry name" value="FadI"/>
    <property type="match status" value="1"/>
</dbReference>
<dbReference type="NCBIfam" id="NF006516">
    <property type="entry name" value="PRK08963.1"/>
    <property type="match status" value="1"/>
</dbReference>
<dbReference type="PANTHER" id="PTHR18919:SF107">
    <property type="entry name" value="ACETYL-COA ACETYLTRANSFERASE, CYTOSOLIC"/>
    <property type="match status" value="1"/>
</dbReference>
<dbReference type="PANTHER" id="PTHR18919">
    <property type="entry name" value="ACETYL-COA C-ACYLTRANSFERASE"/>
    <property type="match status" value="1"/>
</dbReference>
<dbReference type="Pfam" id="PF02803">
    <property type="entry name" value="Thiolase_C"/>
    <property type="match status" value="1"/>
</dbReference>
<dbReference type="Pfam" id="PF00108">
    <property type="entry name" value="Thiolase_N"/>
    <property type="match status" value="1"/>
</dbReference>
<dbReference type="PIRSF" id="PIRSF000429">
    <property type="entry name" value="Ac-CoA_Ac_transf"/>
    <property type="match status" value="1"/>
</dbReference>
<dbReference type="SUPFAM" id="SSF53901">
    <property type="entry name" value="Thiolase-like"/>
    <property type="match status" value="2"/>
</dbReference>
<dbReference type="PROSITE" id="PS00098">
    <property type="entry name" value="THIOLASE_1"/>
    <property type="match status" value="1"/>
</dbReference>
<dbReference type="PROSITE" id="PS00737">
    <property type="entry name" value="THIOLASE_2"/>
    <property type="match status" value="1"/>
</dbReference>
<dbReference type="PROSITE" id="PS00099">
    <property type="entry name" value="THIOLASE_3"/>
    <property type="match status" value="1"/>
</dbReference>
<reference key="1">
    <citation type="journal article" date="2008" name="J. Bacteriol.">
        <title>Insights into the environmental resistance gene pool from the genome sequence of the multidrug-resistant environmental isolate Escherichia coli SMS-3-5.</title>
        <authorList>
            <person name="Fricke W.F."/>
            <person name="Wright M.S."/>
            <person name="Lindell A.H."/>
            <person name="Harkins D.M."/>
            <person name="Baker-Austin C."/>
            <person name="Ravel J."/>
            <person name="Stepanauskas R."/>
        </authorList>
    </citation>
    <scope>NUCLEOTIDE SEQUENCE [LARGE SCALE GENOMIC DNA]</scope>
    <source>
        <strain>SMS-3-5 / SECEC</strain>
    </source>
</reference>
<comment type="function">
    <text evidence="1">Catalyzes the final step of fatty acid oxidation in which acetyl-CoA is released and the CoA ester of a fatty acid two carbons shorter is formed.</text>
</comment>
<comment type="catalytic activity">
    <reaction evidence="1">
        <text>an acyl-CoA + acetyl-CoA = a 3-oxoacyl-CoA + CoA</text>
        <dbReference type="Rhea" id="RHEA:21564"/>
        <dbReference type="ChEBI" id="CHEBI:57287"/>
        <dbReference type="ChEBI" id="CHEBI:57288"/>
        <dbReference type="ChEBI" id="CHEBI:58342"/>
        <dbReference type="ChEBI" id="CHEBI:90726"/>
        <dbReference type="EC" id="2.3.1.16"/>
    </reaction>
</comment>
<comment type="pathway">
    <text evidence="1">Lipid metabolism; fatty acid beta-oxidation.</text>
</comment>
<comment type="subunit">
    <text evidence="1">Heterotetramer of two alpha chains (FadJ) and two beta chains (FadI).</text>
</comment>
<comment type="subcellular location">
    <subcellularLocation>
        <location evidence="1">Cytoplasm</location>
    </subcellularLocation>
</comment>
<comment type="similarity">
    <text evidence="1">Belongs to the thiolase-like superfamily. Thiolase family.</text>
</comment>
<name>FADI_ECOSM</name>